<proteinExistence type="inferred from homology"/>
<accession>B4TDB7</accession>
<dbReference type="EMBL" id="CP001120">
    <property type="protein sequence ID" value="ACF66680.1"/>
    <property type="molecule type" value="Genomic_DNA"/>
</dbReference>
<dbReference type="RefSeq" id="WP_001241346.1">
    <property type="nucleotide sequence ID" value="NC_011083.1"/>
</dbReference>
<dbReference type="SMR" id="B4TDB7"/>
<dbReference type="KEGG" id="seh:SeHA_C2806"/>
<dbReference type="HOGENOM" id="CLU_107144_0_0_6"/>
<dbReference type="Proteomes" id="UP000001866">
    <property type="component" value="Chromosome"/>
</dbReference>
<dbReference type="GO" id="GO:0005829">
    <property type="term" value="C:cytosol"/>
    <property type="evidence" value="ECO:0007669"/>
    <property type="project" value="TreeGrafter"/>
</dbReference>
<dbReference type="GO" id="GO:0051537">
    <property type="term" value="F:2 iron, 2 sulfur cluster binding"/>
    <property type="evidence" value="ECO:0007669"/>
    <property type="project" value="UniProtKB-KW"/>
</dbReference>
<dbReference type="GO" id="GO:0003700">
    <property type="term" value="F:DNA-binding transcription factor activity"/>
    <property type="evidence" value="ECO:0007669"/>
    <property type="project" value="UniProtKB-UniRule"/>
</dbReference>
<dbReference type="GO" id="GO:0003690">
    <property type="term" value="F:double-stranded DNA binding"/>
    <property type="evidence" value="ECO:0007669"/>
    <property type="project" value="UniProtKB-UniRule"/>
</dbReference>
<dbReference type="GO" id="GO:0005506">
    <property type="term" value="F:iron ion binding"/>
    <property type="evidence" value="ECO:0007669"/>
    <property type="project" value="UniProtKB-UniRule"/>
</dbReference>
<dbReference type="FunFam" id="1.10.10.10:FF:000026">
    <property type="entry name" value="HTH-type transcriptional regulator IscR"/>
    <property type="match status" value="1"/>
</dbReference>
<dbReference type="Gene3D" id="1.10.10.10">
    <property type="entry name" value="Winged helix-like DNA-binding domain superfamily/Winged helix DNA-binding domain"/>
    <property type="match status" value="1"/>
</dbReference>
<dbReference type="HAMAP" id="MF_01176">
    <property type="entry name" value="HTH_type_IscR"/>
    <property type="match status" value="1"/>
</dbReference>
<dbReference type="InterPro" id="IPR010242">
    <property type="entry name" value="TF_HTH_IscR"/>
</dbReference>
<dbReference type="InterPro" id="IPR030489">
    <property type="entry name" value="TR_Rrf2-type_CS"/>
</dbReference>
<dbReference type="InterPro" id="IPR000944">
    <property type="entry name" value="Tscrpt_reg_Rrf2"/>
</dbReference>
<dbReference type="InterPro" id="IPR036388">
    <property type="entry name" value="WH-like_DNA-bd_sf"/>
</dbReference>
<dbReference type="InterPro" id="IPR036390">
    <property type="entry name" value="WH_DNA-bd_sf"/>
</dbReference>
<dbReference type="NCBIfam" id="TIGR02010">
    <property type="entry name" value="IscR"/>
    <property type="match status" value="1"/>
</dbReference>
<dbReference type="NCBIfam" id="NF008110">
    <property type="entry name" value="PRK10857.1"/>
    <property type="match status" value="1"/>
</dbReference>
<dbReference type="NCBIfam" id="TIGR00738">
    <property type="entry name" value="rrf2_super"/>
    <property type="match status" value="1"/>
</dbReference>
<dbReference type="PANTHER" id="PTHR33221:SF5">
    <property type="entry name" value="HTH-TYPE TRANSCRIPTIONAL REGULATOR ISCR"/>
    <property type="match status" value="1"/>
</dbReference>
<dbReference type="PANTHER" id="PTHR33221">
    <property type="entry name" value="WINGED HELIX-TURN-HELIX TRANSCRIPTIONAL REGULATOR, RRF2 FAMILY"/>
    <property type="match status" value="1"/>
</dbReference>
<dbReference type="Pfam" id="PF02082">
    <property type="entry name" value="Rrf2"/>
    <property type="match status" value="1"/>
</dbReference>
<dbReference type="SUPFAM" id="SSF46785">
    <property type="entry name" value="Winged helix' DNA-binding domain"/>
    <property type="match status" value="1"/>
</dbReference>
<dbReference type="PROSITE" id="PS01332">
    <property type="entry name" value="HTH_RRF2_1"/>
    <property type="match status" value="1"/>
</dbReference>
<dbReference type="PROSITE" id="PS51197">
    <property type="entry name" value="HTH_RRF2_2"/>
    <property type="match status" value="1"/>
</dbReference>
<feature type="chain" id="PRO_1000138108" description="HTH-type transcriptional regulator IscR">
    <location>
        <begin position="1"/>
        <end position="164"/>
    </location>
</feature>
<feature type="domain" description="HTH rrf2-type" evidence="1">
    <location>
        <begin position="2"/>
        <end position="131"/>
    </location>
</feature>
<feature type="DNA-binding region" description="H-T-H motif" evidence="1">
    <location>
        <begin position="28"/>
        <end position="51"/>
    </location>
</feature>
<feature type="binding site" evidence="1">
    <location>
        <position position="92"/>
    </location>
    <ligand>
        <name>[2Fe-2S] cluster</name>
        <dbReference type="ChEBI" id="CHEBI:190135"/>
    </ligand>
</feature>
<feature type="binding site" evidence="1">
    <location>
        <position position="98"/>
    </location>
    <ligand>
        <name>[2Fe-2S] cluster</name>
        <dbReference type="ChEBI" id="CHEBI:190135"/>
    </ligand>
</feature>
<feature type="binding site" evidence="1">
    <location>
        <position position="104"/>
    </location>
    <ligand>
        <name>[2Fe-2S] cluster</name>
        <dbReference type="ChEBI" id="CHEBI:190135"/>
    </ligand>
</feature>
<sequence>MRLTSKGRYAVTAMLDVALNSEAGPVPLADISERQGISLSYLEQLFSRLRKNGLVSSVRGPGGGYLLGKDAGSIAVGEVISAVDESVDATRCQGKGGCQGGDKCLTHALWRDLSDRLTGFLNNITLGELVNNQEVLDVSGRQHTHDAPRASGRAQDAIDVKLRA</sequence>
<name>ISCR_SALHS</name>
<gene>
    <name evidence="1" type="primary">iscR</name>
    <name type="ordered locus">SeHA_C2806</name>
</gene>
<comment type="function">
    <text evidence="1">Regulates the transcription of several operons and genes involved in the biogenesis of Fe-S clusters and Fe-S-containing proteins.</text>
</comment>
<comment type="cofactor">
    <cofactor evidence="1">
        <name>[2Fe-2S] cluster</name>
        <dbReference type="ChEBI" id="CHEBI:190135"/>
    </cofactor>
    <text evidence="1">Binds 1 [2Fe-2S] cluster.</text>
</comment>
<reference key="1">
    <citation type="journal article" date="2011" name="J. Bacteriol.">
        <title>Comparative genomics of 28 Salmonella enterica isolates: evidence for CRISPR-mediated adaptive sublineage evolution.</title>
        <authorList>
            <person name="Fricke W.F."/>
            <person name="Mammel M.K."/>
            <person name="McDermott P.F."/>
            <person name="Tartera C."/>
            <person name="White D.G."/>
            <person name="Leclerc J.E."/>
            <person name="Ravel J."/>
            <person name="Cebula T.A."/>
        </authorList>
    </citation>
    <scope>NUCLEOTIDE SEQUENCE [LARGE SCALE GENOMIC DNA]</scope>
    <source>
        <strain>SL476</strain>
    </source>
</reference>
<organism>
    <name type="scientific">Salmonella heidelberg (strain SL476)</name>
    <dbReference type="NCBI Taxonomy" id="454169"/>
    <lineage>
        <taxon>Bacteria</taxon>
        <taxon>Pseudomonadati</taxon>
        <taxon>Pseudomonadota</taxon>
        <taxon>Gammaproteobacteria</taxon>
        <taxon>Enterobacterales</taxon>
        <taxon>Enterobacteriaceae</taxon>
        <taxon>Salmonella</taxon>
    </lineage>
</organism>
<keyword id="KW-0001">2Fe-2S</keyword>
<keyword id="KW-0010">Activator</keyword>
<keyword id="KW-0238">DNA-binding</keyword>
<keyword id="KW-0408">Iron</keyword>
<keyword id="KW-0411">Iron-sulfur</keyword>
<keyword id="KW-0479">Metal-binding</keyword>
<keyword id="KW-0678">Repressor</keyword>
<keyword id="KW-0804">Transcription</keyword>
<keyword id="KW-0805">Transcription regulation</keyword>
<evidence type="ECO:0000255" key="1">
    <source>
        <dbReference type="HAMAP-Rule" id="MF_01176"/>
    </source>
</evidence>
<protein>
    <recommendedName>
        <fullName evidence="1">HTH-type transcriptional regulator IscR</fullName>
    </recommendedName>
</protein>